<reference key="1">
    <citation type="journal article" date="1996" name="DNA Res.">
        <title>A 718-kb DNA sequence of the Escherichia coli K-12 genome corresponding to the 12.7-28.0 min region on the linkage map.</title>
        <authorList>
            <person name="Oshima T."/>
            <person name="Aiba H."/>
            <person name="Baba T."/>
            <person name="Fujita K."/>
            <person name="Hayashi K."/>
            <person name="Honjo A."/>
            <person name="Ikemoto K."/>
            <person name="Inada T."/>
            <person name="Itoh T."/>
            <person name="Kajihara M."/>
            <person name="Kanai K."/>
            <person name="Kashimoto K."/>
            <person name="Kimura S."/>
            <person name="Kitagawa M."/>
            <person name="Makino K."/>
            <person name="Masuda S."/>
            <person name="Miki T."/>
            <person name="Mizobuchi K."/>
            <person name="Mori H."/>
            <person name="Motomura K."/>
            <person name="Nakamura Y."/>
            <person name="Nashimoto H."/>
            <person name="Nishio Y."/>
            <person name="Saito N."/>
            <person name="Sampei G."/>
            <person name="Seki Y."/>
            <person name="Tagami H."/>
            <person name="Takemoto K."/>
            <person name="Wada C."/>
            <person name="Yamamoto Y."/>
            <person name="Yano M."/>
            <person name="Horiuchi T."/>
        </authorList>
    </citation>
    <scope>NUCLEOTIDE SEQUENCE [LARGE SCALE GENOMIC DNA]</scope>
    <source>
        <strain>K12 / W3110 / ATCC 27325 / DSM 5911</strain>
    </source>
</reference>
<reference key="2">
    <citation type="journal article" date="1997" name="Science">
        <title>The complete genome sequence of Escherichia coli K-12.</title>
        <authorList>
            <person name="Blattner F.R."/>
            <person name="Plunkett G. III"/>
            <person name="Bloch C.A."/>
            <person name="Perna N.T."/>
            <person name="Burland V."/>
            <person name="Riley M."/>
            <person name="Collado-Vides J."/>
            <person name="Glasner J.D."/>
            <person name="Rode C.K."/>
            <person name="Mayhew G.F."/>
            <person name="Gregor J."/>
            <person name="Davis N.W."/>
            <person name="Kirkpatrick H.A."/>
            <person name="Goeden M.A."/>
            <person name="Rose D.J."/>
            <person name="Mau B."/>
            <person name="Shao Y."/>
        </authorList>
    </citation>
    <scope>NUCLEOTIDE SEQUENCE [LARGE SCALE GENOMIC DNA]</scope>
    <source>
        <strain>K12 / MG1655 / ATCC 47076</strain>
    </source>
</reference>
<reference key="3">
    <citation type="journal article" date="2006" name="Mol. Syst. Biol.">
        <title>Highly accurate genome sequences of Escherichia coli K-12 strains MG1655 and W3110.</title>
        <authorList>
            <person name="Hayashi K."/>
            <person name="Morooka N."/>
            <person name="Yamamoto Y."/>
            <person name="Fujita K."/>
            <person name="Isono K."/>
            <person name="Choi S."/>
            <person name="Ohtsubo E."/>
            <person name="Baba T."/>
            <person name="Wanner B.L."/>
            <person name="Mori H."/>
            <person name="Horiuchi T."/>
        </authorList>
    </citation>
    <scope>NUCLEOTIDE SEQUENCE [LARGE SCALE GENOMIC DNA]</scope>
    <source>
        <strain>K12 / W3110 / ATCC 27325 / DSM 5911</strain>
    </source>
</reference>
<reference key="4">
    <citation type="journal article" date="2000" name="Proc. Natl. Acad. Sci. U.S.A.">
        <title>Nitrogen regulatory protein C-controlled genes of Escherichia coli: scavenging as a defense against nitrogen limitation.</title>
        <authorList>
            <person name="Zimmer D.P."/>
            <person name="Soupene E."/>
            <person name="Lee H.L."/>
            <person name="Wendisch V.F."/>
            <person name="Khodursky A.B."/>
            <person name="Peter B.J."/>
            <person name="Bender R.A."/>
            <person name="Kustu S."/>
        </authorList>
    </citation>
    <scope>INDUCTION</scope>
</reference>
<reference key="5">
    <citation type="journal article" date="2006" name="Proc. Natl. Acad. Sci. U.S.A.">
        <title>A previously undescribed pathway for pyrimidine catabolism.</title>
        <authorList>
            <person name="Loh K.D."/>
            <person name="Gyaneshwar P."/>
            <person name="Markenscoff Papadimitriou E."/>
            <person name="Fong R."/>
            <person name="Kim K.-S."/>
            <person name="Parales R."/>
            <person name="Zhou Z."/>
            <person name="Inwood W."/>
            <person name="Kustu S."/>
        </authorList>
    </citation>
    <scope>FUNCTION IN PYRIMIDINE CATABOLISM</scope>
    <scope>NOMENCLATURE</scope>
    <source>
        <strain>K12 / MG1655 / ATCC 47076</strain>
    </source>
</reference>
<reference key="6">
    <citation type="journal article" date="2007" name="Mol. Microbiol.">
        <title>RutR is the uracil/thymine-sensing master regulator of a set of genes for synthesis and degradation of pyrimidines.</title>
        <authorList>
            <person name="Shimada T."/>
            <person name="Hirao K."/>
            <person name="Kori A."/>
            <person name="Yamamoto K."/>
            <person name="Ishihama A."/>
        </authorList>
    </citation>
    <scope>INDUCTION</scope>
</reference>
<reference key="7">
    <citation type="journal article" date="2010" name="J. Bacteriol.">
        <title>The Rut pathway for pyrimidine degradation: novel chemistry and toxicity problems.</title>
        <authorList>
            <person name="Kim K.S."/>
            <person name="Pelton J.G."/>
            <person name="Inwood W.B."/>
            <person name="Andersen U."/>
            <person name="Kustu S."/>
            <person name="Wemmer D.E."/>
        </authorList>
    </citation>
    <scope>FUNCTION AS AMIDOHYDROLASE</scope>
    <scope>CATALYTIC ACTIVITY</scope>
    <scope>DISRUPTION PHENOTYPE</scope>
</reference>
<keyword id="KW-0002">3D-structure</keyword>
<keyword id="KW-0378">Hydrolase</keyword>
<keyword id="KW-1185">Reference proteome</keyword>
<accession>P75897</accession>
<name>RUTB_ECOLI</name>
<proteinExistence type="evidence at protein level"/>
<sequence>MTTLTARPEAITFDPQQSALIVVDMQNAYATPGGYLDLAGFDVSTTRPVIANIQTAVTAARAAGMLIIWFQNGWDEQYVEAGGPGSPNFHKSNALKTMRKQPQLQGKLLAKGSWDYQLVDELVPQPGDIVLPKPRYSGFFNTPLDSILRSRGIRHLVFTGIATNVCVESTLRDGFFLEYFGVVLEDATHQAGPKFAQKAALFNIETFFGWVSDVETFCDALSPTSFAHIA</sequence>
<protein>
    <recommendedName>
        <fullName>Ureidoacrylate amidohydrolase RutB</fullName>
        <ecNumber evidence="6">3.5.1.110</ecNumber>
    </recommendedName>
</protein>
<comment type="function">
    <text evidence="4 6">Hydrolyzes ureidoacrylate to form aminoacrylate and carbamate. The carbamate hydrolyzes spontaneously, thereby releasing one of the nitrogen atoms of the pyrimidine ring as ammonia and one of its carbon atoms as CO2.</text>
</comment>
<comment type="catalytic activity">
    <reaction evidence="6">
        <text>(Z)-3-ureidoacrylate + H2O + H(+) = (Z)-3-aminoacrylate + NH4(+) + CO2</text>
        <dbReference type="Rhea" id="RHEA:42624"/>
        <dbReference type="ChEBI" id="CHEBI:15377"/>
        <dbReference type="ChEBI" id="CHEBI:15378"/>
        <dbReference type="ChEBI" id="CHEBI:16526"/>
        <dbReference type="ChEBI" id="CHEBI:28938"/>
        <dbReference type="ChEBI" id="CHEBI:59891"/>
        <dbReference type="ChEBI" id="CHEBI:59894"/>
        <dbReference type="EC" id="3.5.1.110"/>
    </reaction>
</comment>
<comment type="catalytic activity">
    <reaction evidence="6">
        <text>(Z)-3-ureidoacrylate + H2O = (Z)-3-aminoacrylate + carbamate + H(+)</text>
        <dbReference type="Rhea" id="RHEA:31603"/>
        <dbReference type="ChEBI" id="CHEBI:13941"/>
        <dbReference type="ChEBI" id="CHEBI:15377"/>
        <dbReference type="ChEBI" id="CHEBI:15378"/>
        <dbReference type="ChEBI" id="CHEBI:59891"/>
        <dbReference type="ChEBI" id="CHEBI:59894"/>
    </reaction>
</comment>
<comment type="catalytic activity">
    <reaction evidence="6">
        <text>(Z)-2-methylureidoacrylate + H2O + H(+) = (Z)-2-methylaminoacrylate + NH4(+) + CO2</text>
        <dbReference type="Rhea" id="RHEA:42620"/>
        <dbReference type="ChEBI" id="CHEBI:15377"/>
        <dbReference type="ChEBI" id="CHEBI:15378"/>
        <dbReference type="ChEBI" id="CHEBI:16526"/>
        <dbReference type="ChEBI" id="CHEBI:28938"/>
        <dbReference type="ChEBI" id="CHEBI:143783"/>
        <dbReference type="ChEBI" id="CHEBI:145735"/>
        <dbReference type="EC" id="3.5.1.110"/>
    </reaction>
</comment>
<comment type="induction">
    <text evidence="3 5">Up-regulated by the nitrogen regulatory protein C (NtrC also called GlnG) and repressed by RutR.</text>
</comment>
<comment type="disruption phenotype">
    <text evidence="6">Cells lacking this gene fail to grow on uridine as the sole source of nitrogen at room temperature.</text>
</comment>
<comment type="miscellaneous">
    <text>The Rut pathway degrades exogenous pyrimidines as the sole nitrogen source at room temperature but not at 37 degrees Celsius, a restriction that is apparently a consequence of an inadequate ability to remove toxic malonic semialdehyde at the higher temperature (RutE/YdfG function).</text>
</comment>
<comment type="similarity">
    <text evidence="2 7">Belongs to the isochorismatase family. RutB subfamily.</text>
</comment>
<dbReference type="EC" id="3.5.1.110" evidence="6"/>
<dbReference type="EMBL" id="U00096">
    <property type="protein sequence ID" value="AAC74096.2"/>
    <property type="molecule type" value="Genomic_DNA"/>
</dbReference>
<dbReference type="EMBL" id="AP009048">
    <property type="protein sequence ID" value="BAA35778.2"/>
    <property type="molecule type" value="Genomic_DNA"/>
</dbReference>
<dbReference type="PIR" id="A64843">
    <property type="entry name" value="A64843"/>
</dbReference>
<dbReference type="RefSeq" id="NP_415531.2">
    <property type="nucleotide sequence ID" value="NC_000913.3"/>
</dbReference>
<dbReference type="RefSeq" id="WP_001393558.1">
    <property type="nucleotide sequence ID" value="NZ_SSZK01000002.1"/>
</dbReference>
<dbReference type="PDB" id="8BKD">
    <property type="method" value="X-ray"/>
    <property type="resolution" value="1.40 A"/>
    <property type="chains" value="A/B/C/D/E/F/G/H/I/J/K/L/M/N/O/P=1-230"/>
</dbReference>
<dbReference type="PDB" id="8BLL">
    <property type="method" value="X-ray"/>
    <property type="resolution" value="1.54 A"/>
    <property type="chains" value="A/B/C/D/E/F/G/H/I/J/K/L/M/N/O/P=1-230"/>
</dbReference>
<dbReference type="PDB" id="8BLM">
    <property type="method" value="X-ray"/>
    <property type="resolution" value="1.90 A"/>
    <property type="chains" value="A/B/C/D/E/F/G/H/I/J/K/L/M/N/O/P=1-230"/>
</dbReference>
<dbReference type="PDB" id="8BLN">
    <property type="method" value="X-ray"/>
    <property type="resolution" value="1.88 A"/>
    <property type="chains" value="A/B/C/D/E/F/G/H=1-230"/>
</dbReference>
<dbReference type="PDB" id="8BYW">
    <property type="method" value="X-ray"/>
    <property type="resolution" value="1.59 A"/>
    <property type="chains" value="A/B/C/D/E/F/G/H/I/J/K/L/M/N/O/P=1-230"/>
</dbReference>
<dbReference type="PDBsum" id="8BKD"/>
<dbReference type="PDBsum" id="8BLL"/>
<dbReference type="PDBsum" id="8BLM"/>
<dbReference type="PDBsum" id="8BLN"/>
<dbReference type="PDBsum" id="8BYW"/>
<dbReference type="SMR" id="P75897"/>
<dbReference type="BioGRID" id="4261997">
    <property type="interactions" value="6"/>
</dbReference>
<dbReference type="DIP" id="DIP-28106N"/>
<dbReference type="FunCoup" id="P75897">
    <property type="interactions" value="210"/>
</dbReference>
<dbReference type="STRING" id="511145.b1011"/>
<dbReference type="PaxDb" id="511145-b1011"/>
<dbReference type="EnsemblBacteria" id="AAC74096">
    <property type="protein sequence ID" value="AAC74096"/>
    <property type="gene ID" value="b1011"/>
</dbReference>
<dbReference type="GeneID" id="945699"/>
<dbReference type="KEGG" id="ecj:JW5139"/>
<dbReference type="KEGG" id="eco:b1011"/>
<dbReference type="KEGG" id="ecoc:C3026_06150"/>
<dbReference type="PATRIC" id="fig|511145.12.peg.1049"/>
<dbReference type="EchoBASE" id="EB3618"/>
<dbReference type="eggNOG" id="COG1335">
    <property type="taxonomic scope" value="Bacteria"/>
</dbReference>
<dbReference type="InParanoid" id="P75897"/>
<dbReference type="OMA" id="WHKSNAL"/>
<dbReference type="OrthoDB" id="9807387at2"/>
<dbReference type="PhylomeDB" id="P75897"/>
<dbReference type="BioCyc" id="EcoCyc:G6522-MONOMER"/>
<dbReference type="BioCyc" id="MetaCyc:G6522-MONOMER"/>
<dbReference type="BRENDA" id="3.5.1.110">
    <property type="organism ID" value="2026"/>
</dbReference>
<dbReference type="PRO" id="PR:P75897"/>
<dbReference type="Proteomes" id="UP000000625">
    <property type="component" value="Chromosome"/>
</dbReference>
<dbReference type="GO" id="GO:0016811">
    <property type="term" value="F:hydrolase activity, acting on carbon-nitrogen (but not peptide) bonds, in linear amides"/>
    <property type="evidence" value="ECO:0000314"/>
    <property type="project" value="UniProtKB"/>
</dbReference>
<dbReference type="GO" id="GO:0019740">
    <property type="term" value="P:nitrogen utilization"/>
    <property type="evidence" value="ECO:0000314"/>
    <property type="project" value="UniProtKB"/>
</dbReference>
<dbReference type="GO" id="GO:0006208">
    <property type="term" value="P:pyrimidine nucleobase catabolic process"/>
    <property type="evidence" value="ECO:0000315"/>
    <property type="project" value="EcoCyc"/>
</dbReference>
<dbReference type="GO" id="GO:0006212">
    <property type="term" value="P:uracil catabolic process"/>
    <property type="evidence" value="ECO:0000314"/>
    <property type="project" value="UniProtKB"/>
</dbReference>
<dbReference type="CDD" id="cd00431">
    <property type="entry name" value="cysteine_hydrolases"/>
    <property type="match status" value="1"/>
</dbReference>
<dbReference type="FunFam" id="3.40.50.850:FF:000004">
    <property type="entry name" value="Peroxyureidoacrylate/ureidoacrylate amidohydrolase RutB"/>
    <property type="match status" value="1"/>
</dbReference>
<dbReference type="Gene3D" id="3.40.50.850">
    <property type="entry name" value="Isochorismatase-like"/>
    <property type="match status" value="1"/>
</dbReference>
<dbReference type="HAMAP" id="MF_00830">
    <property type="entry name" value="RutB"/>
    <property type="match status" value="1"/>
</dbReference>
<dbReference type="InterPro" id="IPR000868">
    <property type="entry name" value="Isochorismatase-like_dom"/>
</dbReference>
<dbReference type="InterPro" id="IPR050272">
    <property type="entry name" value="Isochorismatase-like_hydrls"/>
</dbReference>
<dbReference type="InterPro" id="IPR036380">
    <property type="entry name" value="Isochorismatase-like_sf"/>
</dbReference>
<dbReference type="InterPro" id="IPR019916">
    <property type="entry name" value="RutB"/>
</dbReference>
<dbReference type="NCBIfam" id="TIGR03614">
    <property type="entry name" value="RutB"/>
    <property type="match status" value="1"/>
</dbReference>
<dbReference type="PANTHER" id="PTHR43540:SF6">
    <property type="entry name" value="ISOCHORISMATASE-LIKE DOMAIN-CONTAINING PROTEIN"/>
    <property type="match status" value="1"/>
</dbReference>
<dbReference type="PANTHER" id="PTHR43540">
    <property type="entry name" value="PEROXYUREIDOACRYLATE/UREIDOACRYLATE AMIDOHYDROLASE-RELATED"/>
    <property type="match status" value="1"/>
</dbReference>
<dbReference type="Pfam" id="PF00857">
    <property type="entry name" value="Isochorismatase"/>
    <property type="match status" value="1"/>
</dbReference>
<dbReference type="SUPFAM" id="SSF52499">
    <property type="entry name" value="Isochorismatase-like hydrolases"/>
    <property type="match status" value="1"/>
</dbReference>
<organism>
    <name type="scientific">Escherichia coli (strain K12)</name>
    <dbReference type="NCBI Taxonomy" id="83333"/>
    <lineage>
        <taxon>Bacteria</taxon>
        <taxon>Pseudomonadati</taxon>
        <taxon>Pseudomonadota</taxon>
        <taxon>Gammaproteobacteria</taxon>
        <taxon>Enterobacterales</taxon>
        <taxon>Enterobacteriaceae</taxon>
        <taxon>Escherichia</taxon>
    </lineage>
</organism>
<evidence type="ECO:0000250" key="1">
    <source>
        <dbReference type="UniProtKB" id="I6XD65"/>
    </source>
</evidence>
<evidence type="ECO:0000255" key="2">
    <source>
        <dbReference type="HAMAP-Rule" id="MF_00830"/>
    </source>
</evidence>
<evidence type="ECO:0000269" key="3">
    <source>
    </source>
</evidence>
<evidence type="ECO:0000269" key="4">
    <source>
    </source>
</evidence>
<evidence type="ECO:0000269" key="5">
    <source>
    </source>
</evidence>
<evidence type="ECO:0000269" key="6">
    <source>
    </source>
</evidence>
<evidence type="ECO:0000305" key="7"/>
<evidence type="ECO:0007829" key="8">
    <source>
        <dbReference type="PDB" id="8BKD"/>
    </source>
</evidence>
<gene>
    <name type="primary">rutB</name>
    <name type="synonym">ycdL</name>
    <name type="ordered locus">b1011</name>
    <name type="ordered locus">JW5139</name>
</gene>
<feature type="chain" id="PRO_0000201833" description="Ureidoacrylate amidohydrolase RutB">
    <location>
        <begin position="1"/>
        <end position="230"/>
    </location>
</feature>
<feature type="active site" description="Proton acceptor" evidence="1">
    <location>
        <position position="24"/>
    </location>
</feature>
<feature type="active site" evidence="1">
    <location>
        <position position="133"/>
    </location>
</feature>
<feature type="active site" description="Nucleophile" evidence="1">
    <location>
        <position position="166"/>
    </location>
</feature>
<feature type="strand" evidence="8">
    <location>
        <begin position="7"/>
        <end position="9"/>
    </location>
</feature>
<feature type="helix" evidence="8">
    <location>
        <begin position="15"/>
        <end position="17"/>
    </location>
</feature>
<feature type="strand" evidence="8">
    <location>
        <begin position="18"/>
        <end position="23"/>
    </location>
</feature>
<feature type="helix" evidence="8">
    <location>
        <begin position="27"/>
        <end position="30"/>
    </location>
</feature>
<feature type="helix" evidence="8">
    <location>
        <begin position="35"/>
        <end position="38"/>
    </location>
</feature>
<feature type="helix" evidence="8">
    <location>
        <begin position="47"/>
        <end position="62"/>
    </location>
</feature>
<feature type="strand" evidence="8">
    <location>
        <begin position="66"/>
        <end position="72"/>
    </location>
</feature>
<feature type="helix" evidence="8">
    <location>
        <begin position="79"/>
        <end position="81"/>
    </location>
</feature>
<feature type="helix" evidence="8">
    <location>
        <begin position="87"/>
        <end position="91"/>
    </location>
</feature>
<feature type="helix" evidence="8">
    <location>
        <begin position="93"/>
        <end position="100"/>
    </location>
</feature>
<feature type="helix" evidence="8">
    <location>
        <begin position="102"/>
        <end position="104"/>
    </location>
</feature>
<feature type="strand" evidence="8">
    <location>
        <begin position="108"/>
        <end position="110"/>
    </location>
</feature>
<feature type="turn" evidence="8">
    <location>
        <begin position="114"/>
        <end position="116"/>
    </location>
</feature>
<feature type="strand" evidence="8">
    <location>
        <begin position="129"/>
        <end position="136"/>
    </location>
</feature>
<feature type="strand" evidence="8">
    <location>
        <begin position="140"/>
        <end position="143"/>
    </location>
</feature>
<feature type="helix" evidence="8">
    <location>
        <begin position="144"/>
        <end position="150"/>
    </location>
</feature>
<feature type="strand" evidence="8">
    <location>
        <begin position="155"/>
        <end position="161"/>
    </location>
</feature>
<feature type="turn" evidence="8">
    <location>
        <begin position="163"/>
        <end position="165"/>
    </location>
</feature>
<feature type="helix" evidence="8">
    <location>
        <begin position="166"/>
        <end position="176"/>
    </location>
</feature>
<feature type="strand" evidence="8">
    <location>
        <begin position="180"/>
        <end position="189"/>
    </location>
</feature>
<feature type="strand" evidence="8">
    <location>
        <begin position="191"/>
        <end position="193"/>
    </location>
</feature>
<feature type="helix" evidence="8">
    <location>
        <begin position="194"/>
        <end position="207"/>
    </location>
</feature>
<feature type="strand" evidence="8">
    <location>
        <begin position="210"/>
        <end position="212"/>
    </location>
</feature>
<feature type="helix" evidence="8">
    <location>
        <begin position="214"/>
        <end position="221"/>
    </location>
</feature>